<evidence type="ECO:0000255" key="1">
    <source>
        <dbReference type="HAMAP-Rule" id="MF_01684"/>
    </source>
</evidence>
<feature type="chain" id="PRO_1000187405" description="5'-methylthioadenosine/S-adenosylhomocysteine nucleosidase">
    <location>
        <begin position="1"/>
        <end position="231"/>
    </location>
</feature>
<feature type="active site" description="Proton acceptor" evidence="1">
    <location>
        <position position="12"/>
    </location>
</feature>
<feature type="active site" description="Proton donor" evidence="1">
    <location>
        <position position="198"/>
    </location>
</feature>
<feature type="binding site" evidence="1">
    <location>
        <position position="78"/>
    </location>
    <ligand>
        <name>substrate</name>
    </ligand>
</feature>
<feature type="binding site" evidence="1">
    <location>
        <position position="153"/>
    </location>
    <ligand>
        <name>substrate</name>
    </ligand>
</feature>
<feature type="binding site" evidence="1">
    <location>
        <begin position="174"/>
        <end position="175"/>
    </location>
    <ligand>
        <name>substrate</name>
    </ligand>
</feature>
<proteinExistence type="inferred from homology"/>
<reference key="1">
    <citation type="journal article" date="2008" name="BMC Genomics">
        <title>The genome sequence of the fish pathogen Aliivibrio salmonicida strain LFI1238 shows extensive evidence of gene decay.</title>
        <authorList>
            <person name="Hjerde E."/>
            <person name="Lorentzen M.S."/>
            <person name="Holden M.T."/>
            <person name="Seeger K."/>
            <person name="Paulsen S."/>
            <person name="Bason N."/>
            <person name="Churcher C."/>
            <person name="Harris D."/>
            <person name="Norbertczak H."/>
            <person name="Quail M.A."/>
            <person name="Sanders S."/>
            <person name="Thurston S."/>
            <person name="Parkhill J."/>
            <person name="Willassen N.P."/>
            <person name="Thomson N.R."/>
        </authorList>
    </citation>
    <scope>NUCLEOTIDE SEQUENCE [LARGE SCALE GENOMIC DNA]</scope>
    <source>
        <strain>LFI1238</strain>
    </source>
</reference>
<dbReference type="EC" id="3.2.2.9" evidence="1"/>
<dbReference type="EMBL" id="FM178379">
    <property type="protein sequence ID" value="CAQ80249.1"/>
    <property type="molecule type" value="Genomic_DNA"/>
</dbReference>
<dbReference type="RefSeq" id="WP_012551035.1">
    <property type="nucleotide sequence ID" value="NC_011312.1"/>
</dbReference>
<dbReference type="SMR" id="B6EKZ7"/>
<dbReference type="KEGG" id="vsa:VSAL_I2565"/>
<dbReference type="eggNOG" id="COG0775">
    <property type="taxonomic scope" value="Bacteria"/>
</dbReference>
<dbReference type="HOGENOM" id="CLU_031248_2_2_6"/>
<dbReference type="UniPathway" id="UPA00904">
    <property type="reaction ID" value="UER00871"/>
</dbReference>
<dbReference type="Proteomes" id="UP000001730">
    <property type="component" value="Chromosome 1"/>
</dbReference>
<dbReference type="GO" id="GO:0005829">
    <property type="term" value="C:cytosol"/>
    <property type="evidence" value="ECO:0007669"/>
    <property type="project" value="TreeGrafter"/>
</dbReference>
<dbReference type="GO" id="GO:0008782">
    <property type="term" value="F:adenosylhomocysteine nucleosidase activity"/>
    <property type="evidence" value="ECO:0007669"/>
    <property type="project" value="UniProtKB-UniRule"/>
</dbReference>
<dbReference type="GO" id="GO:0008930">
    <property type="term" value="F:methylthioadenosine nucleosidase activity"/>
    <property type="evidence" value="ECO:0007669"/>
    <property type="project" value="UniProtKB-UniRule"/>
</dbReference>
<dbReference type="GO" id="GO:0019509">
    <property type="term" value="P:L-methionine salvage from methylthioadenosine"/>
    <property type="evidence" value="ECO:0007669"/>
    <property type="project" value="UniProtKB-UniRule"/>
</dbReference>
<dbReference type="GO" id="GO:0019284">
    <property type="term" value="P:L-methionine salvage from S-adenosylmethionine"/>
    <property type="evidence" value="ECO:0007669"/>
    <property type="project" value="TreeGrafter"/>
</dbReference>
<dbReference type="GO" id="GO:0009164">
    <property type="term" value="P:nucleoside catabolic process"/>
    <property type="evidence" value="ECO:0007669"/>
    <property type="project" value="InterPro"/>
</dbReference>
<dbReference type="CDD" id="cd09008">
    <property type="entry name" value="MTAN"/>
    <property type="match status" value="1"/>
</dbReference>
<dbReference type="FunFam" id="3.40.50.1580:FF:000001">
    <property type="entry name" value="MTA/SAH nucleosidase family protein"/>
    <property type="match status" value="1"/>
</dbReference>
<dbReference type="Gene3D" id="3.40.50.1580">
    <property type="entry name" value="Nucleoside phosphorylase domain"/>
    <property type="match status" value="1"/>
</dbReference>
<dbReference type="HAMAP" id="MF_01684">
    <property type="entry name" value="Salvage_MtnN"/>
    <property type="match status" value="1"/>
</dbReference>
<dbReference type="InterPro" id="IPR010049">
    <property type="entry name" value="MTA_SAH_Nsdase"/>
</dbReference>
<dbReference type="InterPro" id="IPR000845">
    <property type="entry name" value="Nucleoside_phosphorylase_d"/>
</dbReference>
<dbReference type="InterPro" id="IPR035994">
    <property type="entry name" value="Nucleoside_phosphorylase_sf"/>
</dbReference>
<dbReference type="NCBIfam" id="TIGR01704">
    <property type="entry name" value="MTA_SAH-Nsdase"/>
    <property type="match status" value="1"/>
</dbReference>
<dbReference type="NCBIfam" id="NF004079">
    <property type="entry name" value="PRK05584.1"/>
    <property type="match status" value="1"/>
</dbReference>
<dbReference type="PANTHER" id="PTHR46832">
    <property type="entry name" value="5'-METHYLTHIOADENOSINE/S-ADENOSYLHOMOCYSTEINE NUCLEOSIDASE"/>
    <property type="match status" value="1"/>
</dbReference>
<dbReference type="PANTHER" id="PTHR46832:SF1">
    <property type="entry name" value="5'-METHYLTHIOADENOSINE_S-ADENOSYLHOMOCYSTEINE NUCLEOSIDASE"/>
    <property type="match status" value="1"/>
</dbReference>
<dbReference type="Pfam" id="PF01048">
    <property type="entry name" value="PNP_UDP_1"/>
    <property type="match status" value="1"/>
</dbReference>
<dbReference type="SUPFAM" id="SSF53167">
    <property type="entry name" value="Purine and uridine phosphorylases"/>
    <property type="match status" value="1"/>
</dbReference>
<accession>B6EKZ7</accession>
<name>MTNN_ALISL</name>
<keyword id="KW-0028">Amino-acid biosynthesis</keyword>
<keyword id="KW-0378">Hydrolase</keyword>
<keyword id="KW-0486">Methionine biosynthesis</keyword>
<sequence length="231" mass="24530">MKIGIIGAMEQEVAILKEQINGLATTIKAGCTFHTGTLNGAEVVLLQSGIGKVAAAVGTTLLISDHNVDVVLNTGSAGGFDSSLNLGDVVISTEVRHHDADVTAFGYEMGQMAQQPAAFKADEKLMAVAEKALTQMEDKHAVRGLICTGDAFVCTPERQAFIRSHFPSVIAVEMEASAIAQTCHQFSVPFVVVRAISDVADKESPMSFEEFLPLAAESSSEMVMKMVTLLK</sequence>
<gene>
    <name evidence="1" type="primary">mtnN</name>
    <name type="ordered locus">VSAL_I2565</name>
</gene>
<comment type="function">
    <text evidence="1">Catalyzes the irreversible cleavage of the glycosidic bond in both 5'-methylthioadenosine (MTA) and S-adenosylhomocysteine (SAH/AdoHcy) to adenine and the corresponding thioribose, 5'-methylthioribose and S-ribosylhomocysteine, respectively. Also cleaves 5'-deoxyadenosine, a toxic by-product of radical S-adenosylmethionine (SAM) enzymes, into 5-deoxyribose and adenine.</text>
</comment>
<comment type="catalytic activity">
    <reaction evidence="1">
        <text>S-adenosyl-L-homocysteine + H2O = S-(5-deoxy-D-ribos-5-yl)-L-homocysteine + adenine</text>
        <dbReference type="Rhea" id="RHEA:17805"/>
        <dbReference type="ChEBI" id="CHEBI:15377"/>
        <dbReference type="ChEBI" id="CHEBI:16708"/>
        <dbReference type="ChEBI" id="CHEBI:57856"/>
        <dbReference type="ChEBI" id="CHEBI:58195"/>
        <dbReference type="EC" id="3.2.2.9"/>
    </reaction>
</comment>
<comment type="catalytic activity">
    <reaction evidence="1">
        <text>S-methyl-5'-thioadenosine + H2O = 5-(methylsulfanyl)-D-ribose + adenine</text>
        <dbReference type="Rhea" id="RHEA:13617"/>
        <dbReference type="ChEBI" id="CHEBI:15377"/>
        <dbReference type="ChEBI" id="CHEBI:16708"/>
        <dbReference type="ChEBI" id="CHEBI:17509"/>
        <dbReference type="ChEBI" id="CHEBI:78440"/>
        <dbReference type="EC" id="3.2.2.9"/>
    </reaction>
</comment>
<comment type="catalytic activity">
    <reaction evidence="1">
        <text>5'-deoxyadenosine + H2O = 5-deoxy-D-ribose + adenine</text>
        <dbReference type="Rhea" id="RHEA:29859"/>
        <dbReference type="ChEBI" id="CHEBI:15377"/>
        <dbReference type="ChEBI" id="CHEBI:16708"/>
        <dbReference type="ChEBI" id="CHEBI:17319"/>
        <dbReference type="ChEBI" id="CHEBI:149540"/>
        <dbReference type="EC" id="3.2.2.9"/>
    </reaction>
    <physiologicalReaction direction="left-to-right" evidence="1">
        <dbReference type="Rhea" id="RHEA:29860"/>
    </physiologicalReaction>
</comment>
<comment type="pathway">
    <text evidence="1">Amino-acid biosynthesis; L-methionine biosynthesis via salvage pathway; S-methyl-5-thio-alpha-D-ribose 1-phosphate from S-methyl-5'-thioadenosine (hydrolase route): step 1/2.</text>
</comment>
<comment type="similarity">
    <text evidence="1">Belongs to the PNP/UDP phosphorylase family. MtnN subfamily.</text>
</comment>
<protein>
    <recommendedName>
        <fullName evidence="1">5'-methylthioadenosine/S-adenosylhomocysteine nucleosidase</fullName>
        <shortName evidence="1">MTA/SAH nucleosidase</shortName>
        <shortName evidence="1">MTAN</shortName>
        <ecNumber evidence="1">3.2.2.9</ecNumber>
    </recommendedName>
    <alternativeName>
        <fullName evidence="1">5'-deoxyadenosine nucleosidase</fullName>
        <shortName evidence="1">DOA nucleosidase</shortName>
        <shortName evidence="1">dAdo nucleosidase</shortName>
    </alternativeName>
    <alternativeName>
        <fullName evidence="1">5'-methylthioadenosine nucleosidase</fullName>
        <shortName evidence="1">MTA nucleosidase</shortName>
    </alternativeName>
    <alternativeName>
        <fullName evidence="1">S-adenosylhomocysteine nucleosidase</fullName>
        <shortName evidence="1">AdoHcy nucleosidase</shortName>
        <shortName evidence="1">SAH nucleosidase</shortName>
        <shortName evidence="1">SRH nucleosidase</shortName>
    </alternativeName>
</protein>
<organism>
    <name type="scientific">Aliivibrio salmonicida (strain LFI1238)</name>
    <name type="common">Vibrio salmonicida (strain LFI1238)</name>
    <dbReference type="NCBI Taxonomy" id="316275"/>
    <lineage>
        <taxon>Bacteria</taxon>
        <taxon>Pseudomonadati</taxon>
        <taxon>Pseudomonadota</taxon>
        <taxon>Gammaproteobacteria</taxon>
        <taxon>Vibrionales</taxon>
        <taxon>Vibrionaceae</taxon>
        <taxon>Aliivibrio</taxon>
    </lineage>
</organism>